<comment type="subcellular location">
    <subcellularLocation>
        <location evidence="2">Cell membrane</location>
        <topology evidence="2">Multi-pass membrane protein</topology>
    </subcellularLocation>
</comment>
<comment type="similarity">
    <text evidence="2">Belongs to the UPF0410 family.</text>
</comment>
<feature type="chain" id="PRO_0000389108" description="UPF0410 protein YdaS">
    <location>
        <begin position="1"/>
        <end position="85"/>
    </location>
</feature>
<feature type="transmembrane region" description="Helical" evidence="1">
    <location>
        <begin position="2"/>
        <end position="22"/>
    </location>
</feature>
<feature type="transmembrane region" description="Helical" evidence="1">
    <location>
        <begin position="28"/>
        <end position="48"/>
    </location>
</feature>
<feature type="transmembrane region" description="Helical" evidence="1">
    <location>
        <begin position="58"/>
        <end position="78"/>
    </location>
</feature>
<gene>
    <name type="primary">ydaS</name>
    <name type="ordered locus">BSU04370</name>
</gene>
<protein>
    <recommendedName>
        <fullName>UPF0410 protein YdaS</fullName>
    </recommendedName>
</protein>
<keyword id="KW-1003">Cell membrane</keyword>
<keyword id="KW-0472">Membrane</keyword>
<keyword id="KW-1185">Reference proteome</keyword>
<keyword id="KW-0812">Transmembrane</keyword>
<keyword id="KW-1133">Transmembrane helix</keyword>
<sequence length="85" mass="8649">MLSFLVSLVVAIVIGLIGSAIVGNRLPGGIFGSMIAGLIGAWIGHGLLGTWGPSLAGFAIFPAIIGAAIFVFLLGLIFRGLRKEA</sequence>
<name>YDAS_BACSU</name>
<reference key="1">
    <citation type="submission" date="1997-03" db="EMBL/GenBank/DDBJ databases">
        <title>A 148 kbp sequence of the region between 35 and 47 degree of the Bacillus subtilis genome.</title>
        <authorList>
            <person name="Kasahara Y."/>
            <person name="Nakai S."/>
            <person name="Lee S."/>
            <person name="Sadaie Y."/>
            <person name="Ogasawara N."/>
        </authorList>
    </citation>
    <scope>NUCLEOTIDE SEQUENCE [GENOMIC DNA]</scope>
    <source>
        <strain>168</strain>
    </source>
</reference>
<reference key="2">
    <citation type="journal article" date="2008" name="J. Bacteriol.">
        <title>The origins of 168, W23, and other Bacillus subtilis legacy strains.</title>
        <authorList>
            <person name="Zeigler D.R."/>
            <person name="Pragai Z."/>
            <person name="Rodriguez S."/>
            <person name="Chevreux B."/>
            <person name="Muffler A."/>
            <person name="Albert T."/>
            <person name="Bai R."/>
            <person name="Wyss M."/>
            <person name="Perkins J.B."/>
        </authorList>
    </citation>
    <scope>NUCLEOTIDE SEQUENCE [GENOMIC DNA]</scope>
    <source>
        <strain>168 / PY79</strain>
    </source>
</reference>
<reference key="3">
    <citation type="journal article" date="1997" name="Nature">
        <title>The complete genome sequence of the Gram-positive bacterium Bacillus subtilis.</title>
        <authorList>
            <person name="Kunst F."/>
            <person name="Ogasawara N."/>
            <person name="Moszer I."/>
            <person name="Albertini A.M."/>
            <person name="Alloni G."/>
            <person name="Azevedo V."/>
            <person name="Bertero M.G."/>
            <person name="Bessieres P."/>
            <person name="Bolotin A."/>
            <person name="Borchert S."/>
            <person name="Borriss R."/>
            <person name="Boursier L."/>
            <person name="Brans A."/>
            <person name="Braun M."/>
            <person name="Brignell S.C."/>
            <person name="Bron S."/>
            <person name="Brouillet S."/>
            <person name="Bruschi C.V."/>
            <person name="Caldwell B."/>
            <person name="Capuano V."/>
            <person name="Carter N.M."/>
            <person name="Choi S.-K."/>
            <person name="Codani J.-J."/>
            <person name="Connerton I.F."/>
            <person name="Cummings N.J."/>
            <person name="Daniel R.A."/>
            <person name="Denizot F."/>
            <person name="Devine K.M."/>
            <person name="Duesterhoeft A."/>
            <person name="Ehrlich S.D."/>
            <person name="Emmerson P.T."/>
            <person name="Entian K.-D."/>
            <person name="Errington J."/>
            <person name="Fabret C."/>
            <person name="Ferrari E."/>
            <person name="Foulger D."/>
            <person name="Fritz C."/>
            <person name="Fujita M."/>
            <person name="Fujita Y."/>
            <person name="Fuma S."/>
            <person name="Galizzi A."/>
            <person name="Galleron N."/>
            <person name="Ghim S.-Y."/>
            <person name="Glaser P."/>
            <person name="Goffeau A."/>
            <person name="Golightly E.J."/>
            <person name="Grandi G."/>
            <person name="Guiseppi G."/>
            <person name="Guy B.J."/>
            <person name="Haga K."/>
            <person name="Haiech J."/>
            <person name="Harwood C.R."/>
            <person name="Henaut A."/>
            <person name="Hilbert H."/>
            <person name="Holsappel S."/>
            <person name="Hosono S."/>
            <person name="Hullo M.-F."/>
            <person name="Itaya M."/>
            <person name="Jones L.-M."/>
            <person name="Joris B."/>
            <person name="Karamata D."/>
            <person name="Kasahara Y."/>
            <person name="Klaerr-Blanchard M."/>
            <person name="Klein C."/>
            <person name="Kobayashi Y."/>
            <person name="Koetter P."/>
            <person name="Koningstein G."/>
            <person name="Krogh S."/>
            <person name="Kumano M."/>
            <person name="Kurita K."/>
            <person name="Lapidus A."/>
            <person name="Lardinois S."/>
            <person name="Lauber J."/>
            <person name="Lazarevic V."/>
            <person name="Lee S.-M."/>
            <person name="Levine A."/>
            <person name="Liu H."/>
            <person name="Masuda S."/>
            <person name="Mauel C."/>
            <person name="Medigue C."/>
            <person name="Medina N."/>
            <person name="Mellado R.P."/>
            <person name="Mizuno M."/>
            <person name="Moestl D."/>
            <person name="Nakai S."/>
            <person name="Noback M."/>
            <person name="Noone D."/>
            <person name="O'Reilly M."/>
            <person name="Ogawa K."/>
            <person name="Ogiwara A."/>
            <person name="Oudega B."/>
            <person name="Park S.-H."/>
            <person name="Parro V."/>
            <person name="Pohl T.M."/>
            <person name="Portetelle D."/>
            <person name="Porwollik S."/>
            <person name="Prescott A.M."/>
            <person name="Presecan E."/>
            <person name="Pujic P."/>
            <person name="Purnelle B."/>
            <person name="Rapoport G."/>
            <person name="Rey M."/>
            <person name="Reynolds S."/>
            <person name="Rieger M."/>
            <person name="Rivolta C."/>
            <person name="Rocha E."/>
            <person name="Roche B."/>
            <person name="Rose M."/>
            <person name="Sadaie Y."/>
            <person name="Sato T."/>
            <person name="Scanlan E."/>
            <person name="Schleich S."/>
            <person name="Schroeter R."/>
            <person name="Scoffone F."/>
            <person name="Sekiguchi J."/>
            <person name="Sekowska A."/>
            <person name="Seror S.J."/>
            <person name="Serror P."/>
            <person name="Shin B.-S."/>
            <person name="Soldo B."/>
            <person name="Sorokin A."/>
            <person name="Tacconi E."/>
            <person name="Takagi T."/>
            <person name="Takahashi H."/>
            <person name="Takemaru K."/>
            <person name="Takeuchi M."/>
            <person name="Tamakoshi A."/>
            <person name="Tanaka T."/>
            <person name="Terpstra P."/>
            <person name="Tognoni A."/>
            <person name="Tosato V."/>
            <person name="Uchiyama S."/>
            <person name="Vandenbol M."/>
            <person name="Vannier F."/>
            <person name="Vassarotti A."/>
            <person name="Viari A."/>
            <person name="Wambutt R."/>
            <person name="Wedler E."/>
            <person name="Wedler H."/>
            <person name="Weitzenegger T."/>
            <person name="Winters P."/>
            <person name="Wipat A."/>
            <person name="Yamamoto H."/>
            <person name="Yamane K."/>
            <person name="Yasumoto K."/>
            <person name="Yata K."/>
            <person name="Yoshida K."/>
            <person name="Yoshikawa H.-F."/>
            <person name="Zumstein E."/>
            <person name="Yoshikawa H."/>
            <person name="Danchin A."/>
        </authorList>
    </citation>
    <scope>NUCLEOTIDE SEQUENCE [LARGE SCALE GENOMIC DNA]</scope>
    <source>
        <strain>168</strain>
    </source>
</reference>
<organism>
    <name type="scientific">Bacillus subtilis (strain 168)</name>
    <dbReference type="NCBI Taxonomy" id="224308"/>
    <lineage>
        <taxon>Bacteria</taxon>
        <taxon>Bacillati</taxon>
        <taxon>Bacillota</taxon>
        <taxon>Bacilli</taxon>
        <taxon>Bacillales</taxon>
        <taxon>Bacillaceae</taxon>
        <taxon>Bacillus</taxon>
    </lineage>
</organism>
<accession>P96594</accession>
<accession>Q797M0</accession>
<proteinExistence type="inferred from homology"/>
<dbReference type="EMBL" id="AB001488">
    <property type="protein sequence ID" value="BAA19274.1"/>
    <property type="molecule type" value="Genomic_DNA"/>
</dbReference>
<dbReference type="EMBL" id="EU084745">
    <property type="protein sequence ID" value="ABU88889.1"/>
    <property type="molecule type" value="Genomic_DNA"/>
</dbReference>
<dbReference type="EMBL" id="AL009126">
    <property type="protein sequence ID" value="CAB12244.1"/>
    <property type="molecule type" value="Genomic_DNA"/>
</dbReference>
<dbReference type="PIR" id="B69770">
    <property type="entry name" value="B69770"/>
</dbReference>
<dbReference type="RefSeq" id="NP_388318.1">
    <property type="nucleotide sequence ID" value="NC_000964.3"/>
</dbReference>
<dbReference type="RefSeq" id="WP_003246519.1">
    <property type="nucleotide sequence ID" value="NZ_OZ025638.1"/>
</dbReference>
<dbReference type="FunCoup" id="P96594">
    <property type="interactions" value="40"/>
</dbReference>
<dbReference type="STRING" id="224308.BSU04370"/>
<dbReference type="PaxDb" id="224308-BSU04370"/>
<dbReference type="EnsemblBacteria" id="CAB12244">
    <property type="protein sequence ID" value="CAB12244"/>
    <property type="gene ID" value="BSU_04370"/>
</dbReference>
<dbReference type="GeneID" id="938230"/>
<dbReference type="KEGG" id="bsu:BSU04370"/>
<dbReference type="PATRIC" id="fig|224308.179.peg.463"/>
<dbReference type="eggNOG" id="COG2261">
    <property type="taxonomic scope" value="Bacteria"/>
</dbReference>
<dbReference type="InParanoid" id="P96594"/>
<dbReference type="OrthoDB" id="1632160at2"/>
<dbReference type="PhylomeDB" id="P96594"/>
<dbReference type="BioCyc" id="BSUB:BSU04370-MONOMER"/>
<dbReference type="Proteomes" id="UP000001570">
    <property type="component" value="Chromosome"/>
</dbReference>
<dbReference type="GO" id="GO:0005886">
    <property type="term" value="C:plasma membrane"/>
    <property type="evidence" value="ECO:0007669"/>
    <property type="project" value="UniProtKB-SubCell"/>
</dbReference>
<dbReference type="InterPro" id="IPR007341">
    <property type="entry name" value="Transgly_assoc"/>
</dbReference>
<dbReference type="PANTHER" id="PTHR33884">
    <property type="entry name" value="UPF0410 PROTEIN YMGE"/>
    <property type="match status" value="1"/>
</dbReference>
<dbReference type="PANTHER" id="PTHR33884:SF3">
    <property type="entry name" value="UPF0410 PROTEIN YMGE"/>
    <property type="match status" value="1"/>
</dbReference>
<dbReference type="Pfam" id="PF04226">
    <property type="entry name" value="Transgly_assoc"/>
    <property type="match status" value="1"/>
</dbReference>
<evidence type="ECO:0000255" key="1"/>
<evidence type="ECO:0000305" key="2"/>